<sequence length="636" mass="70105">MAARPLSRMLRRLLRSSARSCSSGAPVTQPCPGESARAASEEVSRRRQFLREHAAPFSAFLTDSFGRQHSYLRISLTEKCNLRCQYCMPEEGVPLTPKANLLTTEEILTLARLFVKEGIDKIRLTGGEPLIRPDVVDIVAQLQRLEGLRTIGVTTNGINLARLLPQLQKAGLSAINISLDTLVPAKFEFIVRRKGFHKVMEGIHKAIELGYNPVKVNCVVMRGLNEDELLDFAALTEGLPLDVRFIEYMPFDGNKWNFKKMVSYKEMLDTVRQQWPELEKVPEEESSTAKAFKIPGFQGQISFITSMSEHFCGTCNRLRITADGNLKVCLFGNSEVSLRDHLRAGASEQELLRIIGAAVGRKKRQHAGMFSISQMKNRPMILIELFLMFPNSPPANPSIFSWDPLHVQGLRPRMSFSSQVATLWKGCRVPQTPPLAQQRLGSGSFQRHYTSRADSDANSKCLSPGSWASAAPSGPQLTSEQLTHVDSEGRAAMVDVGRKPDTERVAVASAVVLLGPVAFKLVQQNQLKKGDALVVAQLAGVQAAKVTSQLIPLCHHVALSHIQVQLELDSTRHAVKIQASCRARGPTGVEMEALTSAAVAALTLYDMCKAVSRDIVLEEIKLISKTGGQRGDFHRA</sequence>
<protein>
    <recommendedName>
        <fullName>Molybdenum cofactor biosynthesis protein 1</fullName>
    </recommendedName>
    <alternativeName>
        <fullName>Cell migration-inducing gene 11 protein</fullName>
    </alternativeName>
    <alternativeName>
        <fullName>Molybdenum cofactor synthesis-step 1 protein A-B</fullName>
    </alternativeName>
    <domain>
        <recommendedName>
            <fullName evidence="20">GTP 3',8-cyclase</fullName>
            <ecNumber evidence="2">4.1.99.22</ecNumber>
        </recommendedName>
        <alternativeName>
            <fullName>Molybdenum cofactor biosynthesis protein A</fullName>
        </alternativeName>
    </domain>
    <domain>
        <recommendedName>
            <fullName evidence="20">Cyclic pyranopterin monophosphate synthase</fullName>
            <ecNumber evidence="12">4.6.1.17</ecNumber>
        </recommendedName>
        <alternativeName>
            <fullName>Molybdenum cofactor biosynthesis protein C</fullName>
        </alternativeName>
    </domain>
</protein>
<comment type="function">
    <text evidence="7">Isoform MOCS1A and isoform MOCS1B probably form a complex that catalyzes the conversion of 5'-GTP to cyclic pyranopterin monophosphate (cPMP). MOCS1A catalyzes the cyclization of GTP to (8S)-3',8-cyclo-7,8-dihydroguanosine 5'-triphosphate and MOCS1B catalyzes the subsequent conversion of (8S)-3',8-cyclo-7,8-dihydroguanosine 5'-triphosphate to cPMP.</text>
</comment>
<comment type="catalytic activity">
    <reaction evidence="2">
        <text>GTP + AH2 + S-adenosyl-L-methionine = (8S)-3',8-cyclo-7,8-dihydroguanosine 5'-triphosphate + 5'-deoxyadenosine + L-methionine + A + H(+)</text>
        <dbReference type="Rhea" id="RHEA:49576"/>
        <dbReference type="ChEBI" id="CHEBI:13193"/>
        <dbReference type="ChEBI" id="CHEBI:15378"/>
        <dbReference type="ChEBI" id="CHEBI:17319"/>
        <dbReference type="ChEBI" id="CHEBI:17499"/>
        <dbReference type="ChEBI" id="CHEBI:37565"/>
        <dbReference type="ChEBI" id="CHEBI:57844"/>
        <dbReference type="ChEBI" id="CHEBI:59789"/>
        <dbReference type="ChEBI" id="CHEBI:131766"/>
        <dbReference type="EC" id="4.1.99.22"/>
    </reaction>
</comment>
<comment type="catalytic activity">
    <reaction evidence="12">
        <text>(8S)-3',8-cyclo-7,8-dihydroguanosine 5'-triphosphate = cyclic pyranopterin phosphate + diphosphate</text>
        <dbReference type="Rhea" id="RHEA:49580"/>
        <dbReference type="ChEBI" id="CHEBI:33019"/>
        <dbReference type="ChEBI" id="CHEBI:59648"/>
        <dbReference type="ChEBI" id="CHEBI:131766"/>
        <dbReference type="EC" id="4.6.1.17"/>
    </reaction>
</comment>
<comment type="cofactor">
    <cofactor evidence="10">
        <name>[4Fe-4S] cluster</name>
        <dbReference type="ChEBI" id="CHEBI:49883"/>
    </cofactor>
    <text evidence="10">Binds 2 [4Fe-4S] clusters. Binds 1 [4Fe-4S] cluster coordinated with 3 cysteines and an exchangeable S-adenosyl-L-methionine and 1 [4Fe-4S] cluster coordinated with 3 cysteines and the GTP-derived substrate.</text>
</comment>
<comment type="biophysicochemical properties">
    <kinetics>
        <KM evidence="12">0.79 uM for (8S)-3',8-cyclo-7,8-dihydroguanosine 5'-triphosphate</KM>
        <text evidence="12">kcat is 0.092 min(-1) for (8S)-3',8-cyclo-7,8-dihydroguanosine 5'-triphosphate.</text>
    </kinetics>
</comment>
<comment type="pathway">
    <text>Cofactor biosynthesis; molybdopterin biosynthesis.</text>
</comment>
<comment type="subunit">
    <text evidence="20">Isoform MOCS1A and isoform MOCS1B probably form a heterooligomer.</text>
</comment>
<comment type="alternative products">
    <event type="alternative splicing"/>
    <isoform>
        <id>Q9NZB8-1</id>
        <name>MOCS1B</name>
        <name>MOCS1B Type-II</name>
        <sequence type="displayed"/>
    </isoform>
    <isoform>
        <id>Q9NZB8-5</id>
        <name>MOCS1A</name>
        <name>MOCS1A Type/Iad</name>
        <sequence type="described" ref="VSP_036826 VSP_036827"/>
    </isoform>
    <isoform>
        <id>Q9NZB8-6</id>
        <name>2</name>
        <name>MOCS1A Type-Ibcd</name>
        <sequence type="described" ref="VSP_036822 VSP_036826 VSP_036827"/>
    </isoform>
    <isoform>
        <id>Q9NZB8-3</id>
        <name>3</name>
        <name>MOCS1A Type-Ibd</name>
        <sequence type="described" ref="VSP_036823 VSP_036826 VSP_036827"/>
    </isoform>
    <isoform>
        <id>Q9NZB8-4</id>
        <name>4</name>
        <sequence type="described" ref="VSP_036821 VSP_036824 VSP_036825"/>
    </isoform>
    <isoform>
        <id>Q9NZB8-2</id>
        <name>6</name>
        <name>MOCS1B Type-III</name>
        <sequence type="described" ref="VSP_007439"/>
    </isoform>
    <isoform>
        <id>Q9NZB8-7</id>
        <name>7</name>
        <sequence type="described" ref="VSP_036821 VSP_007439"/>
    </isoform>
    <isoform>
        <id>Q9NZB8-8</id>
        <name>8</name>
        <sequence type="described" ref="VSP_036822"/>
    </isoform>
    <text>So far, the different types of MOCS1A and MOCS1B isoforms have been investigated independently and several combinations might be possible.</text>
</comment>
<comment type="tissue specificity">
    <text evidence="8 13">Isoform MOCS1A and isoform 2 are widely expressed.</text>
</comment>
<comment type="disease" evidence="9 11 13 14">
    <disease id="DI-01989">
        <name>Molybdenum cofactor deficiency A</name>
        <acronym>MOCODA</acronym>
        <description>An autosomal recessive metabolic disorder leading to the pleiotropic loss of molybdoenzyme activities. It is clinically characterized by onset in infancy of poor feeding, intractable seizures, severe psychomotor retardation, and death in early childhood in most patients.</description>
        <dbReference type="MIM" id="252150"/>
    </disease>
    <text>The disease is caused by variants affecting the gene represented in this entry.</text>
</comment>
<comment type="miscellaneous">
    <text>The MOCS1 locus has initially been reported to produce MOCS1A and MOCS1B from non-overlapping reading frames within a bicistronic transcript. However, only isoform MOCS1A seems to be translated from the bicistronic transcript. Isoform MOCS1B seems to be translated from a monocistronic mRNA that is derived by alternative splicing.</text>
</comment>
<comment type="miscellaneous">
    <molecule>Isoform MOCS1B</molecule>
    <text>Multidomain protein with inactive MOCS1A and active MOCS1B.</text>
</comment>
<comment type="miscellaneous">
    <molecule>Isoform 4</molecule>
    <text evidence="20">May be produced at very low levels due to a premature stop codon in the mRNA, leading to nonsense-mediated mRNA decay.</text>
</comment>
<comment type="miscellaneous">
    <molecule>Isoform 6</molecule>
    <text evidence="20">Multidomain protein with inactive MOCS1A and active MOCS1B.</text>
</comment>
<comment type="similarity">
    <text evidence="20">In the C-terminal section; belongs to the MoaC family.</text>
</comment>
<comment type="similarity">
    <text evidence="20">In the N-terminal section; belongs to the radical SAM superfamily. MoaA family.</text>
</comment>
<comment type="caution">
    <text evidence="21">The C-terminus of MOCS1A was previously believed to be thiocarboxylated, but it is now known not to be the case.</text>
</comment>
<comment type="sequence caution" evidence="20">
    <conflict type="miscellaneous discrepancy">
        <sequence resource="EMBL-CDS" id="AAB87524"/>
    </conflict>
    <text>Alternative splicing in the MOCS1A-MOCS1B joining region.</text>
</comment>
<comment type="sequence caution" evidence="20">
    <conflict type="erroneous initiation">
        <sequence resource="EMBL-CDS" id="AAS00489"/>
    </conflict>
</comment>
<comment type="sequence caution" evidence="20">
    <conflict type="miscellaneous discrepancy">
        <sequence resource="EMBL-CDS" id="CAC44526"/>
    </conflict>
    <text>Alternative splicing in the MOCS1A-MOCS1B joining region.</text>
</comment>
<comment type="sequence caution" evidence="20">
    <conflict type="erroneous gene model prediction">
        <sequence resource="EMBL-CDS" id="CAI20007"/>
    </conflict>
</comment>
<comment type="sequence caution" evidence="20">
    <conflict type="erroneous gene model prediction">
        <sequence resource="EMBL-CDS" id="CAI20012"/>
    </conflict>
</comment>
<comment type="sequence caution" evidence="20">
    <conflict type="erroneous gene model prediction">
        <sequence resource="EMBL-CDS" id="CAI20013"/>
    </conflict>
</comment>
<gene>
    <name type="primary">MOCS1</name>
    <name type="ORF">MIG11</name>
</gene>
<keyword id="KW-0004">4Fe-4S</keyword>
<keyword id="KW-0007">Acetylation</keyword>
<keyword id="KW-0025">Alternative splicing</keyword>
<keyword id="KW-0225">Disease variant</keyword>
<keyword id="KW-0342">GTP-binding</keyword>
<keyword id="KW-0408">Iron</keyword>
<keyword id="KW-0411">Iron-sulfur</keyword>
<keyword id="KW-0456">Lyase</keyword>
<keyword id="KW-0479">Metal-binding</keyword>
<keyword id="KW-0501">Molybdenum cofactor biosynthesis</keyword>
<keyword id="KW-0547">Nucleotide-binding</keyword>
<keyword id="KW-0597">Phosphoprotein</keyword>
<keyword id="KW-1267">Proteomics identification</keyword>
<keyword id="KW-1185">Reference proteome</keyword>
<keyword id="KW-0949">S-adenosyl-L-methionine</keyword>
<dbReference type="EC" id="4.1.99.22" evidence="2"/>
<dbReference type="EC" id="4.6.1.17" evidence="12"/>
<dbReference type="EMBL" id="AJ224328">
    <property type="protein sequence ID" value="CAA11897.1"/>
    <property type="molecule type" value="mRNA"/>
</dbReference>
<dbReference type="EMBL" id="AJ224328">
    <property type="protein sequence ID" value="CAA11898.1"/>
    <property type="molecule type" value="mRNA"/>
</dbReference>
<dbReference type="EMBL" id="AJ404969">
    <property type="protein sequence ID" value="CAC44526.1"/>
    <property type="status" value="ALT_SEQ"/>
    <property type="molecule type" value="Genomic_DNA"/>
</dbReference>
<dbReference type="EMBL" id="AJ293577">
    <property type="protein sequence ID" value="CAC44527.1"/>
    <property type="molecule type" value="Genomic_DNA"/>
</dbReference>
<dbReference type="EMBL" id="AJ293578">
    <property type="protein sequence ID" value="CAC44527.1"/>
    <property type="status" value="JOINED"/>
    <property type="molecule type" value="Genomic_DNA"/>
</dbReference>
<dbReference type="EMBL" id="AJ293579">
    <property type="protein sequence ID" value="CAC44527.1"/>
    <property type="status" value="JOINED"/>
    <property type="molecule type" value="Genomic_DNA"/>
</dbReference>
<dbReference type="EMBL" id="AF034374">
    <property type="protein sequence ID" value="AAB87523.1"/>
    <property type="molecule type" value="mRNA"/>
</dbReference>
<dbReference type="EMBL" id="AF034374">
    <property type="protein sequence ID" value="AAB87524.1"/>
    <property type="status" value="ALT_SEQ"/>
    <property type="molecule type" value="mRNA"/>
</dbReference>
<dbReference type="EMBL" id="AK300300">
    <property type="protein sequence ID" value="BAG62053.1"/>
    <property type="molecule type" value="mRNA"/>
</dbReference>
<dbReference type="EMBL" id="AK056740">
    <property type="protein sequence ID" value="BAG51799.1"/>
    <property type="molecule type" value="mRNA"/>
</dbReference>
<dbReference type="EMBL" id="AL136089">
    <property type="protein sequence ID" value="CAI20007.1"/>
    <property type="status" value="ALT_SEQ"/>
    <property type="molecule type" value="Genomic_DNA"/>
</dbReference>
<dbReference type="EMBL" id="AL136089">
    <property type="protein sequence ID" value="CAI20011.1"/>
    <property type="molecule type" value="Genomic_DNA"/>
</dbReference>
<dbReference type="EMBL" id="AL136089">
    <property type="protein sequence ID" value="CAI20012.1"/>
    <property type="status" value="ALT_SEQ"/>
    <property type="molecule type" value="Genomic_DNA"/>
</dbReference>
<dbReference type="EMBL" id="AL136089">
    <property type="protein sequence ID" value="CAI20013.1"/>
    <property type="status" value="ALT_SEQ"/>
    <property type="molecule type" value="Genomic_DNA"/>
</dbReference>
<dbReference type="EMBL" id="AL136089">
    <property type="protein sequence ID" value="CAI20014.1"/>
    <property type="molecule type" value="Genomic_DNA"/>
</dbReference>
<dbReference type="EMBL" id="AL136089">
    <property type="protein sequence ID" value="CAI20015.1"/>
    <property type="molecule type" value="Genomic_DNA"/>
</dbReference>
<dbReference type="EMBL" id="BC036839">
    <property type="protein sequence ID" value="AAH36839.1"/>
    <property type="molecule type" value="mRNA"/>
</dbReference>
<dbReference type="EMBL" id="AF214022">
    <property type="protein sequence ID" value="AAF67857.1"/>
    <property type="molecule type" value="mRNA"/>
</dbReference>
<dbReference type="EMBL" id="AF214023">
    <property type="protein sequence ID" value="AAF67858.1"/>
    <property type="molecule type" value="mRNA"/>
</dbReference>
<dbReference type="EMBL" id="AY423726">
    <property type="protein sequence ID" value="AAS00489.1"/>
    <property type="status" value="ALT_INIT"/>
    <property type="molecule type" value="mRNA"/>
</dbReference>
<dbReference type="CCDS" id="CCDS43460.1">
    <molecule id="Q9NZB8-5"/>
</dbReference>
<dbReference type="CCDS" id="CCDS87394.1">
    <molecule id="Q9NZB8-1"/>
</dbReference>
<dbReference type="RefSeq" id="NP_001068566.1">
    <molecule id="Q9NZB8-5"/>
    <property type="nucleotide sequence ID" value="NM_001075098.4"/>
</dbReference>
<dbReference type="RefSeq" id="NP_001345458.1">
    <molecule id="Q9NZB8-2"/>
    <property type="nucleotide sequence ID" value="NM_001358529.2"/>
</dbReference>
<dbReference type="RefSeq" id="NP_001345459.1">
    <molecule id="Q9NZB8-1"/>
    <property type="nucleotide sequence ID" value="NM_001358530.2"/>
</dbReference>
<dbReference type="RefSeq" id="NP_005934.2">
    <molecule id="Q9NZB8-6"/>
    <property type="nucleotide sequence ID" value="NM_005943.5"/>
</dbReference>
<dbReference type="RefSeq" id="XP_011512934.1">
    <property type="nucleotide sequence ID" value="XM_011514632.2"/>
</dbReference>
<dbReference type="RefSeq" id="XP_011512935.1">
    <property type="nucleotide sequence ID" value="XM_011514633.2"/>
</dbReference>
<dbReference type="SMR" id="Q9NZB8"/>
<dbReference type="BioGRID" id="110480">
    <property type="interactions" value="33"/>
</dbReference>
<dbReference type="FunCoup" id="Q9NZB8">
    <property type="interactions" value="1653"/>
</dbReference>
<dbReference type="IntAct" id="Q9NZB8">
    <property type="interactions" value="29"/>
</dbReference>
<dbReference type="STRING" id="9606.ENSP00000344794"/>
<dbReference type="DrugBank" id="DB16628">
    <property type="generic name" value="Fosdenopterin"/>
</dbReference>
<dbReference type="DrugCentral" id="Q9NZB8"/>
<dbReference type="iPTMnet" id="Q9NZB8"/>
<dbReference type="PhosphoSitePlus" id="Q9NZB8"/>
<dbReference type="BioMuta" id="MOCS1"/>
<dbReference type="DMDM" id="30913216"/>
<dbReference type="jPOST" id="Q9NZB8"/>
<dbReference type="MassIVE" id="Q9NZB8"/>
<dbReference type="PaxDb" id="9606-ENSP00000362282"/>
<dbReference type="PeptideAtlas" id="Q9NZB8"/>
<dbReference type="ProteomicsDB" id="83350">
    <molecule id="Q9NZB8-1"/>
</dbReference>
<dbReference type="ProteomicsDB" id="83351">
    <molecule id="Q9NZB8-2"/>
</dbReference>
<dbReference type="ProteomicsDB" id="83352">
    <molecule id="Q9NZB8-3"/>
</dbReference>
<dbReference type="ProteomicsDB" id="83353">
    <molecule id="Q9NZB8-4"/>
</dbReference>
<dbReference type="ProteomicsDB" id="83354">
    <molecule id="Q9NZB8-5"/>
</dbReference>
<dbReference type="ProteomicsDB" id="83355">
    <molecule id="Q9NZB8-6"/>
</dbReference>
<dbReference type="ProteomicsDB" id="83356">
    <molecule id="Q9NZB8-7"/>
</dbReference>
<dbReference type="ProteomicsDB" id="83357">
    <molecule id="Q9NZB8-8"/>
</dbReference>
<dbReference type="Pumba" id="Q9NZB8"/>
<dbReference type="Antibodypedia" id="51647">
    <property type="antibodies" value="186 antibodies from 22 providers"/>
</dbReference>
<dbReference type="DNASU" id="4337"/>
<dbReference type="Ensembl" id="ENST00000340692.10">
    <molecule id="Q9NZB8-1"/>
    <property type="protein sequence ID" value="ENSP00000344794.5"/>
    <property type="gene ID" value="ENSG00000124615.21"/>
</dbReference>
<dbReference type="Ensembl" id="ENST00000373181.8">
    <molecule id="Q9NZB8-4"/>
    <property type="protein sequence ID" value="ENSP00000362277.4"/>
    <property type="gene ID" value="ENSG00000124615.21"/>
</dbReference>
<dbReference type="Ensembl" id="ENST00000373188.6">
    <molecule id="Q9NZB8-5"/>
    <property type="protein sequence ID" value="ENSP00000362284.2"/>
    <property type="gene ID" value="ENSG00000124615.21"/>
</dbReference>
<dbReference type="Ensembl" id="ENST00000373195.7">
    <molecule id="Q9NZB8-7"/>
    <property type="protein sequence ID" value="ENSP00000362291.3"/>
    <property type="gene ID" value="ENSG00000124615.21"/>
</dbReference>
<dbReference type="GeneID" id="4337"/>
<dbReference type="KEGG" id="hsa:4337"/>
<dbReference type="MANE-Select" id="ENST00000340692.10">
    <property type="protein sequence ID" value="ENSP00000344794.5"/>
    <property type="RefSeq nucleotide sequence ID" value="NM_001358530.2"/>
    <property type="RefSeq protein sequence ID" value="NP_001345459.1"/>
</dbReference>
<dbReference type="UCSC" id="uc003opa.4">
    <molecule id="Q9NZB8-1"/>
    <property type="organism name" value="human"/>
</dbReference>
<dbReference type="AGR" id="HGNC:7190"/>
<dbReference type="CTD" id="4337"/>
<dbReference type="DisGeNET" id="4337"/>
<dbReference type="GeneCards" id="MOCS1"/>
<dbReference type="GeneReviews" id="MOCS1"/>
<dbReference type="HGNC" id="HGNC:7190">
    <property type="gene designation" value="MOCS1"/>
</dbReference>
<dbReference type="HPA" id="ENSG00000124615">
    <property type="expression patterns" value="Low tissue specificity"/>
</dbReference>
<dbReference type="MalaCards" id="MOCS1"/>
<dbReference type="MIM" id="252150">
    <property type="type" value="phenotype"/>
</dbReference>
<dbReference type="MIM" id="603707">
    <property type="type" value="gene"/>
</dbReference>
<dbReference type="neXtProt" id="NX_Q9NZB8"/>
<dbReference type="OpenTargets" id="ENSG00000124615"/>
<dbReference type="Orphanet" id="308386">
    <property type="disease" value="Sulfite oxidase deficiency due to molybdenum cofactor deficiency type A"/>
</dbReference>
<dbReference type="PharmGKB" id="PA30900"/>
<dbReference type="VEuPathDB" id="HostDB:ENSG00000124615"/>
<dbReference type="eggNOG" id="KOG2876">
    <property type="taxonomic scope" value="Eukaryota"/>
</dbReference>
<dbReference type="GeneTree" id="ENSGT00390000016567"/>
<dbReference type="HOGENOM" id="CLU_009273_0_0_1"/>
<dbReference type="InParanoid" id="Q9NZB8"/>
<dbReference type="OMA" id="QTVHMTS"/>
<dbReference type="OrthoDB" id="429626at2759"/>
<dbReference type="PAN-GO" id="Q9NZB8">
    <property type="GO annotations" value="3 GO annotations based on evolutionary models"/>
</dbReference>
<dbReference type="PhylomeDB" id="Q9NZB8"/>
<dbReference type="TreeFam" id="TF300424"/>
<dbReference type="BRENDA" id="4.1.99.22">
    <property type="organism ID" value="2681"/>
</dbReference>
<dbReference type="BRENDA" id="4.6.1.17">
    <property type="organism ID" value="2681"/>
</dbReference>
<dbReference type="PathwayCommons" id="Q9NZB8"/>
<dbReference type="Reactome" id="R-HSA-947581">
    <property type="pathway name" value="Molybdenum cofactor biosynthesis"/>
</dbReference>
<dbReference type="SignaLink" id="Q9NZB8"/>
<dbReference type="UniPathway" id="UPA00344"/>
<dbReference type="BioGRID-ORCS" id="4337">
    <property type="hits" value="10 hits in 1161 CRISPR screens"/>
</dbReference>
<dbReference type="ChiTaRS" id="MOCS1">
    <property type="organism name" value="human"/>
</dbReference>
<dbReference type="GeneWiki" id="MOCS1"/>
<dbReference type="GenomeRNAi" id="4337"/>
<dbReference type="Pharos" id="Q9NZB8">
    <property type="development level" value="Tclin"/>
</dbReference>
<dbReference type="PRO" id="PR:Q9NZB8"/>
<dbReference type="Proteomes" id="UP000005640">
    <property type="component" value="Chromosome 6"/>
</dbReference>
<dbReference type="RNAct" id="Q9NZB8">
    <property type="molecule type" value="protein"/>
</dbReference>
<dbReference type="Bgee" id="ENSG00000124615">
    <property type="expression patterns" value="Expressed in apex of heart and 166 other cell types or tissues"/>
</dbReference>
<dbReference type="ExpressionAtlas" id="Q9NZB8">
    <property type="expression patterns" value="baseline and differential"/>
</dbReference>
<dbReference type="GO" id="GO:0005829">
    <property type="term" value="C:cytosol"/>
    <property type="evidence" value="ECO:0000314"/>
    <property type="project" value="HPA"/>
</dbReference>
<dbReference type="GO" id="GO:0005739">
    <property type="term" value="C:mitochondrion"/>
    <property type="evidence" value="ECO:0006056"/>
    <property type="project" value="FlyBase"/>
</dbReference>
<dbReference type="GO" id="GO:0051539">
    <property type="term" value="F:4 iron, 4 sulfur cluster binding"/>
    <property type="evidence" value="ECO:0000314"/>
    <property type="project" value="UniProtKB"/>
</dbReference>
<dbReference type="GO" id="GO:0061799">
    <property type="term" value="F:cyclic pyranopterin monophosphate synthase activity"/>
    <property type="evidence" value="ECO:0000315"/>
    <property type="project" value="MGI"/>
</dbReference>
<dbReference type="GO" id="GO:0061798">
    <property type="term" value="F:GTP 3',8'-cyclase activity"/>
    <property type="evidence" value="ECO:0000315"/>
    <property type="project" value="MGI"/>
</dbReference>
<dbReference type="GO" id="GO:0005525">
    <property type="term" value="F:GTP binding"/>
    <property type="evidence" value="ECO:0007669"/>
    <property type="project" value="UniProtKB-KW"/>
</dbReference>
<dbReference type="GO" id="GO:0046872">
    <property type="term" value="F:metal ion binding"/>
    <property type="evidence" value="ECO:0007669"/>
    <property type="project" value="UniProtKB-KW"/>
</dbReference>
<dbReference type="GO" id="GO:1904047">
    <property type="term" value="F:S-adenosyl-L-methionine binding"/>
    <property type="evidence" value="ECO:0007669"/>
    <property type="project" value="Ensembl"/>
</dbReference>
<dbReference type="GO" id="GO:0006777">
    <property type="term" value="P:Mo-molybdopterin cofactor biosynthetic process"/>
    <property type="evidence" value="ECO:0000314"/>
    <property type="project" value="UniProtKB"/>
</dbReference>
<dbReference type="CDD" id="cd01420">
    <property type="entry name" value="MoaC_PE"/>
    <property type="match status" value="1"/>
</dbReference>
<dbReference type="CDD" id="cd01335">
    <property type="entry name" value="Radical_SAM"/>
    <property type="match status" value="1"/>
</dbReference>
<dbReference type="CDD" id="cd21117">
    <property type="entry name" value="Twitch_MoaA"/>
    <property type="match status" value="1"/>
</dbReference>
<dbReference type="FunFam" id="3.30.70.640:FF:000002">
    <property type="entry name" value="Molybdenum cofactor biosynthesis protein 1"/>
    <property type="match status" value="1"/>
</dbReference>
<dbReference type="FunFam" id="3.20.20.70:FF:000117">
    <property type="entry name" value="molybdenum cofactor biosynthesis protein 1"/>
    <property type="match status" value="1"/>
</dbReference>
<dbReference type="Gene3D" id="3.20.20.70">
    <property type="entry name" value="Aldolase class I"/>
    <property type="match status" value="1"/>
</dbReference>
<dbReference type="Gene3D" id="3.30.70.640">
    <property type="entry name" value="Molybdopterin cofactor biosynthesis C (MoaC) domain"/>
    <property type="match status" value="1"/>
</dbReference>
<dbReference type="HAMAP" id="MF_01225_B">
    <property type="entry name" value="MoaA_B"/>
    <property type="match status" value="1"/>
</dbReference>
<dbReference type="HAMAP" id="MF_01224_B">
    <property type="entry name" value="MoaC_B"/>
    <property type="match status" value="1"/>
</dbReference>
<dbReference type="InterPro" id="IPR013785">
    <property type="entry name" value="Aldolase_TIM"/>
</dbReference>
<dbReference type="InterPro" id="IPR006638">
    <property type="entry name" value="Elp3/MiaA/NifB-like_rSAM"/>
</dbReference>
<dbReference type="InterPro" id="IPR013483">
    <property type="entry name" value="MoaA"/>
</dbReference>
<dbReference type="InterPro" id="IPR000385">
    <property type="entry name" value="MoaA_NifB_PqqE_Fe-S-bd_CS"/>
</dbReference>
<dbReference type="InterPro" id="IPR010505">
    <property type="entry name" value="MoaA_twitch"/>
</dbReference>
<dbReference type="InterPro" id="IPR023045">
    <property type="entry name" value="MoaC"/>
</dbReference>
<dbReference type="InterPro" id="IPR047594">
    <property type="entry name" value="MoaC_bact/euk"/>
</dbReference>
<dbReference type="InterPro" id="IPR036522">
    <property type="entry name" value="MoaC_sf"/>
</dbReference>
<dbReference type="InterPro" id="IPR050105">
    <property type="entry name" value="MoCo_biosynth_MoaA/MoaC"/>
</dbReference>
<dbReference type="InterPro" id="IPR002820">
    <property type="entry name" value="Mopterin_CF_biosynth-C_dom"/>
</dbReference>
<dbReference type="InterPro" id="IPR007197">
    <property type="entry name" value="rSAM"/>
</dbReference>
<dbReference type="NCBIfam" id="TIGR02666">
    <property type="entry name" value="moaA"/>
    <property type="match status" value="1"/>
</dbReference>
<dbReference type="NCBIfam" id="TIGR00581">
    <property type="entry name" value="moaC"/>
    <property type="match status" value="1"/>
</dbReference>
<dbReference type="NCBIfam" id="NF006870">
    <property type="entry name" value="PRK09364.1"/>
    <property type="match status" value="1"/>
</dbReference>
<dbReference type="PANTHER" id="PTHR22960:SF26">
    <property type="entry name" value="MOLYBDENUM COFACTOR BIOSYNTHESIS PROTEIN 1"/>
    <property type="match status" value="1"/>
</dbReference>
<dbReference type="PANTHER" id="PTHR22960">
    <property type="entry name" value="MOLYBDOPTERIN COFACTOR SYNTHESIS PROTEIN A"/>
    <property type="match status" value="1"/>
</dbReference>
<dbReference type="Pfam" id="PF13353">
    <property type="entry name" value="Fer4_12"/>
    <property type="match status" value="1"/>
</dbReference>
<dbReference type="Pfam" id="PF01967">
    <property type="entry name" value="MoaC"/>
    <property type="match status" value="1"/>
</dbReference>
<dbReference type="Pfam" id="PF06463">
    <property type="entry name" value="Mob_synth_C"/>
    <property type="match status" value="1"/>
</dbReference>
<dbReference type="Pfam" id="PF04055">
    <property type="entry name" value="Radical_SAM"/>
    <property type="match status" value="1"/>
</dbReference>
<dbReference type="SFLD" id="SFLDG01383">
    <property type="entry name" value="cyclic_pyranopterin_phosphate"/>
    <property type="match status" value="1"/>
</dbReference>
<dbReference type="SFLD" id="SFLDG01072">
    <property type="entry name" value="dehydrogenase_like"/>
    <property type="match status" value="1"/>
</dbReference>
<dbReference type="SMART" id="SM00729">
    <property type="entry name" value="Elp3"/>
    <property type="match status" value="1"/>
</dbReference>
<dbReference type="SUPFAM" id="SSF55040">
    <property type="entry name" value="Molybdenum cofactor biosynthesis protein C, MoaC"/>
    <property type="match status" value="1"/>
</dbReference>
<dbReference type="SUPFAM" id="SSF102114">
    <property type="entry name" value="Radical SAM enzymes"/>
    <property type="match status" value="1"/>
</dbReference>
<dbReference type="PROSITE" id="PS01305">
    <property type="entry name" value="MOAA_NIFB_PQQE"/>
    <property type="match status" value="1"/>
</dbReference>
<dbReference type="PROSITE" id="PS51918">
    <property type="entry name" value="RADICAL_SAM"/>
    <property type="match status" value="1"/>
</dbReference>
<proteinExistence type="evidence at protein level"/>
<name>MOCS1_HUMAN</name>
<feature type="chain" id="PRO_0000097870" description="Molybdenum cofactor biosynthesis protein 1">
    <location>
        <begin position="1"/>
        <end position="636"/>
    </location>
</feature>
<feature type="domain" description="Radical SAM core" evidence="5">
    <location>
        <begin position="64"/>
        <end position="277"/>
    </location>
</feature>
<feature type="region of interest" description="Molybdenum cofactor biosynthesis protein A">
    <location>
        <begin position="1"/>
        <end position="383"/>
    </location>
</feature>
<feature type="region of interest" description="Molybdenum cofactor biosynthesis protein C">
    <location>
        <begin position="414"/>
        <end position="636"/>
    </location>
</feature>
<feature type="region of interest" description="Disordered" evidence="6">
    <location>
        <begin position="456"/>
        <end position="480"/>
    </location>
</feature>
<feature type="compositionally biased region" description="Low complexity" evidence="6">
    <location>
        <begin position="463"/>
        <end position="475"/>
    </location>
</feature>
<feature type="active site" description="For molybdenum cofactor biosynthesis protein C activity" evidence="4">
    <location>
        <position position="606"/>
    </location>
</feature>
<feature type="binding site" evidence="1">
    <location>
        <position position="73"/>
    </location>
    <ligand>
        <name>GTP</name>
        <dbReference type="ChEBI" id="CHEBI:37565"/>
    </ligand>
</feature>
<feature type="binding site" evidence="20">
    <location>
        <position position="80"/>
    </location>
    <ligand>
        <name>[4Fe-4S] cluster</name>
        <dbReference type="ChEBI" id="CHEBI:49883"/>
        <label>1</label>
        <note>4Fe-4S-S-AdoMet</note>
    </ligand>
</feature>
<feature type="binding site" evidence="20">
    <location>
        <position position="84"/>
    </location>
    <ligand>
        <name>[4Fe-4S] cluster</name>
        <dbReference type="ChEBI" id="CHEBI:49883"/>
        <label>1</label>
        <note>4Fe-4S-S-AdoMet</note>
    </ligand>
</feature>
<feature type="binding site" evidence="1">
    <location>
        <position position="86"/>
    </location>
    <ligand>
        <name>S-adenosyl-L-methionine</name>
        <dbReference type="ChEBI" id="CHEBI:59789"/>
    </ligand>
</feature>
<feature type="binding site" evidence="20">
    <location>
        <position position="87"/>
    </location>
    <ligand>
        <name>[4Fe-4S] cluster</name>
        <dbReference type="ChEBI" id="CHEBI:49883"/>
        <label>1</label>
        <note>4Fe-4S-S-AdoMet</note>
    </ligand>
</feature>
<feature type="binding site" evidence="1">
    <location>
        <position position="123"/>
    </location>
    <ligand>
        <name>GTP</name>
        <dbReference type="ChEBI" id="CHEBI:37565"/>
    </ligand>
</feature>
<feature type="binding site" evidence="1">
    <location>
        <position position="127"/>
    </location>
    <ligand>
        <name>S-adenosyl-L-methionine</name>
        <dbReference type="ChEBI" id="CHEBI:59789"/>
    </ligand>
</feature>
<feature type="binding site" evidence="1">
    <location>
        <position position="154"/>
    </location>
    <ligand>
        <name>GTP</name>
        <dbReference type="ChEBI" id="CHEBI:37565"/>
    </ligand>
</feature>
<feature type="binding site" evidence="1">
    <location>
        <position position="178"/>
    </location>
    <ligand>
        <name>S-adenosyl-L-methionine</name>
        <dbReference type="ChEBI" id="CHEBI:59789"/>
    </ligand>
</feature>
<feature type="binding site" evidence="1">
    <location>
        <position position="215"/>
    </location>
    <ligand>
        <name>GTP</name>
        <dbReference type="ChEBI" id="CHEBI:37565"/>
    </ligand>
</feature>
<feature type="binding site" evidence="1">
    <location>
        <position position="249"/>
    </location>
    <ligand>
        <name>S-adenosyl-L-methionine</name>
        <dbReference type="ChEBI" id="CHEBI:59789"/>
    </ligand>
</feature>
<feature type="binding site" evidence="20">
    <location>
        <position position="312"/>
    </location>
    <ligand>
        <name>[4Fe-4S] cluster</name>
        <dbReference type="ChEBI" id="CHEBI:49883"/>
        <label>2</label>
        <note>4Fe-4S-substrate</note>
    </ligand>
</feature>
<feature type="binding site" evidence="20">
    <location>
        <position position="315"/>
    </location>
    <ligand>
        <name>[4Fe-4S] cluster</name>
        <dbReference type="ChEBI" id="CHEBI:49883"/>
        <label>2</label>
        <note>4Fe-4S-substrate</note>
    </ligand>
</feature>
<feature type="binding site" evidence="1">
    <location>
        <begin position="317"/>
        <end position="319"/>
    </location>
    <ligand>
        <name>GTP</name>
        <dbReference type="ChEBI" id="CHEBI:37565"/>
    </ligand>
</feature>
<feature type="binding site" evidence="20">
    <location>
        <position position="329"/>
    </location>
    <ligand>
        <name>[4Fe-4S] cluster</name>
        <dbReference type="ChEBI" id="CHEBI:49883"/>
        <label>2</label>
        <note>4Fe-4S-substrate</note>
    </ligand>
</feature>
<feature type="modified residue" description="Phosphoserine" evidence="23">
    <location>
        <position position="64"/>
    </location>
</feature>
<feature type="modified residue" description="N6-acetyllysine" evidence="22">
    <location>
        <position position="198"/>
    </location>
</feature>
<feature type="modified residue" description="N6-acetyllysine" evidence="3">
    <location>
        <position position="528"/>
    </location>
</feature>
<feature type="splice variant" id="VSP_036821" description="In isoform 4 and isoform 7." evidence="16 17">
    <location>
        <begin position="1"/>
        <end position="87"/>
    </location>
</feature>
<feature type="splice variant" id="VSP_036822" description="In isoform 2 and isoform 8." evidence="18">
    <original>MAARPLSRMLRRLLRSSARSCSSGAPVTQPCPGESARAASE</original>
    <variation>MWKSWKLRTDVRVREGAGGSPCASSQPGSRGPCFLPGLSSQ</variation>
    <location>
        <begin position="1"/>
        <end position="41"/>
    </location>
</feature>
<feature type="splice variant" id="VSP_036823" description="In isoform 3." evidence="20">
    <original>MAARPLSRMLRRLLRSSARSCSSGAPVTQPCPGESARAASE</original>
    <variation>MWKSWKLRTDVR</variation>
    <location>
        <begin position="1"/>
        <end position="41"/>
    </location>
</feature>
<feature type="splice variant" id="VSP_007439" description="In isoform 6 and isoform 7." evidence="15 16">
    <location>
        <begin position="368"/>
        <end position="383"/>
    </location>
</feature>
<feature type="splice variant" id="VSP_036824" description="In isoform 4." evidence="17">
    <original>G</original>
    <variation>E</variation>
    <location>
        <position position="368"/>
    </location>
</feature>
<feature type="splice variant" id="VSP_036825" description="In isoform 4." evidence="17">
    <location>
        <begin position="369"/>
        <end position="636"/>
    </location>
</feature>
<feature type="splice variant" id="VSP_036826" description="In isoform MOCS1A, isoform 2 and isoform 3." evidence="16 18 19">
    <original>EL</original>
    <variation>GG</variation>
    <location>
        <begin position="384"/>
        <end position="385"/>
    </location>
</feature>
<feature type="splice variant" id="VSP_036827" description="In isoform MOCS1A, isoform 2 and isoform 3." evidence="16 18 19">
    <location>
        <begin position="386"/>
        <end position="636"/>
    </location>
</feature>
<feature type="sequence variant" id="VAR_054823" description="In MOCODA; dbSNP:rs754441164." evidence="11">
    <original>R</original>
    <variation>W</variation>
    <location>
        <position position="67"/>
    </location>
</feature>
<feature type="sequence variant" id="VAR_015658" description="In MOCODA; dbSNP:rs104893970." evidence="14">
    <original>R</original>
    <variation>W</variation>
    <location>
        <position position="73"/>
    </location>
</feature>
<feature type="sequence variant" id="VAR_054824" description="In MOCODA; dbSNP:rs151141411." evidence="11">
    <original>C</original>
    <variation>G</variation>
    <location>
        <position position="80"/>
    </location>
</feature>
<feature type="sequence variant" id="VAR_054825" description="In MOCODA." evidence="11">
    <original>C</original>
    <variation>F</variation>
    <location>
        <position position="84"/>
    </location>
</feature>
<feature type="sequence variant" id="VAR_054826" description="In MOCODA; dbSNP:rs779592342." evidence="9">
    <original>R</original>
    <variation>W</variation>
    <location>
        <position position="123"/>
    </location>
</feature>
<feature type="sequence variant" id="VAR_015659" description="In MOCODA; dbSNP:rs372246702." evidence="14">
    <original>G</original>
    <variation>D</variation>
    <location>
        <position position="126"/>
    </location>
</feature>
<feature type="sequence variant" id="VAR_015660" description="In MOCODA." evidence="14">
    <original>G</original>
    <variation>D</variation>
    <location>
        <position position="127"/>
    </location>
</feature>
<feature type="sequence variant" id="VAR_015661" description="In MOCODA; dbSNP:rs104893969." evidence="14">
    <original>R</original>
    <variation>Q</variation>
    <location>
        <position position="319"/>
    </location>
</feature>
<feature type="sequence variant" id="VAR_015662" description="In MOCODA; dbSNP:rs1187685038." evidence="14">
    <original>G</original>
    <variation>E</variation>
    <location>
        <position position="324"/>
    </location>
</feature>
<feature type="sequence variant" id="VAR_054827" description="In MOCODA; dbSNP:rs762253951." evidence="9">
    <original>G</original>
    <variation>R</variation>
    <location>
        <position position="324"/>
    </location>
</feature>
<feature type="sequence variant" id="VAR_056131" description="In dbSNP:rs11969769.">
    <original>P</original>
    <variation>H</variation>
    <location>
        <position position="390"/>
    </location>
</feature>
<feature type="sequence variant" id="VAR_061346" description="In dbSNP:rs11969206.">
    <original>R</original>
    <variation>L</variation>
    <location>
        <position position="452"/>
    </location>
</feature>
<feature type="mutagenesis site" description="Impairs precursor Z synthesis." evidence="10">
    <original>C</original>
    <variation>S</variation>
    <location>
        <position position="80"/>
    </location>
</feature>
<feature type="mutagenesis site" description="Impairs precursor Z synthesis." evidence="10">
    <original>C</original>
    <variation>S</variation>
    <location>
        <position position="84"/>
    </location>
</feature>
<feature type="mutagenesis site" description="Impairs precursor Z synthesis." evidence="10">
    <original>C</original>
    <variation>S</variation>
    <location>
        <position position="87"/>
    </location>
</feature>
<feature type="mutagenesis site" description="Impairs precursor Z synthesis." evidence="10">
    <original>C</original>
    <variation>S</variation>
    <location>
        <position position="312"/>
    </location>
</feature>
<feature type="mutagenesis site" description="Impairs precursor Z synthesis." evidence="10">
    <original>C</original>
    <variation>S</variation>
    <location>
        <position position="315"/>
    </location>
</feature>
<feature type="mutagenesis site" description="Impairs precursor Z synthesis." evidence="10">
    <original>C</original>
    <variation>S</variation>
    <location>
        <position position="329"/>
    </location>
</feature>
<feature type="sequence conflict" description="In Ref. 3; BAG51799/BAG62053." evidence="20" ref="3">
    <original>A</original>
    <variation>V</variation>
    <location>
        <position position="233"/>
    </location>
</feature>
<feature type="sequence conflict" description="In Ref. 2; AAB87523." evidence="20" ref="2">
    <original>L</original>
    <variation>H</variation>
    <location>
        <position position="239"/>
    </location>
</feature>
<feature type="sequence conflict" description="In Ref. 3; BAG51799." evidence="20" ref="3">
    <original>A</original>
    <variation>G</variation>
    <location>
        <position position="421"/>
    </location>
</feature>
<organism>
    <name type="scientific">Homo sapiens</name>
    <name type="common">Human</name>
    <dbReference type="NCBI Taxonomy" id="9606"/>
    <lineage>
        <taxon>Eukaryota</taxon>
        <taxon>Metazoa</taxon>
        <taxon>Chordata</taxon>
        <taxon>Craniata</taxon>
        <taxon>Vertebrata</taxon>
        <taxon>Euteleostomi</taxon>
        <taxon>Mammalia</taxon>
        <taxon>Eutheria</taxon>
        <taxon>Euarchontoglires</taxon>
        <taxon>Primates</taxon>
        <taxon>Haplorrhini</taxon>
        <taxon>Catarrhini</taxon>
        <taxon>Hominidae</taxon>
        <taxon>Homo</taxon>
    </lineage>
</organism>
<reference key="1">
    <citation type="journal article" date="1998" name="Nat. Genet.">
        <title>Mutations in a polycistronic nuclear gene associated with molybdenum cofactor deficiency.</title>
        <authorList>
            <person name="Reiss J.P."/>
            <person name="Cohen N."/>
            <person name="Dorche C."/>
            <person name="Mandel H."/>
            <person name="Mendel R.R."/>
            <person name="Stallmeyer B."/>
            <person name="Zabot M.-T."/>
            <person name="Dierks T."/>
        </authorList>
    </citation>
    <scope>NUCLEOTIDE SEQUENCE [GENOMIC DNA / MRNA] (ISOFORMS MOCS1A; 2 AND 8)</scope>
    <scope>INVOLVEMENT IN MOCODA</scope>
    <scope>TISSUE SPECIFICITY</scope>
</reference>
<reference key="2">
    <citation type="submission" date="1997-11" db="EMBL/GenBank/DDBJ databases">
        <authorList>
            <person name="Larin D."/>
            <person name="Ross B.M."/>
            <person name="Gilliam T.C."/>
        </authorList>
    </citation>
    <scope>NUCLEOTIDE SEQUENCE [MRNA] (ISOFORMS MOCS1A AND MOCS1B)</scope>
</reference>
<reference key="3">
    <citation type="journal article" date="2004" name="Nat. Genet.">
        <title>Complete sequencing and characterization of 21,243 full-length human cDNAs.</title>
        <authorList>
            <person name="Ota T."/>
            <person name="Suzuki Y."/>
            <person name="Nishikawa T."/>
            <person name="Otsuki T."/>
            <person name="Sugiyama T."/>
            <person name="Irie R."/>
            <person name="Wakamatsu A."/>
            <person name="Hayashi K."/>
            <person name="Sato H."/>
            <person name="Nagai K."/>
            <person name="Kimura K."/>
            <person name="Makita H."/>
            <person name="Sekine M."/>
            <person name="Obayashi M."/>
            <person name="Nishi T."/>
            <person name="Shibahara T."/>
            <person name="Tanaka T."/>
            <person name="Ishii S."/>
            <person name="Yamamoto J."/>
            <person name="Saito K."/>
            <person name="Kawai Y."/>
            <person name="Isono Y."/>
            <person name="Nakamura Y."/>
            <person name="Nagahari K."/>
            <person name="Murakami K."/>
            <person name="Yasuda T."/>
            <person name="Iwayanagi T."/>
            <person name="Wagatsuma M."/>
            <person name="Shiratori A."/>
            <person name="Sudo H."/>
            <person name="Hosoiri T."/>
            <person name="Kaku Y."/>
            <person name="Kodaira H."/>
            <person name="Kondo H."/>
            <person name="Sugawara M."/>
            <person name="Takahashi M."/>
            <person name="Kanda K."/>
            <person name="Yokoi T."/>
            <person name="Furuya T."/>
            <person name="Kikkawa E."/>
            <person name="Omura Y."/>
            <person name="Abe K."/>
            <person name="Kamihara K."/>
            <person name="Katsuta N."/>
            <person name="Sato K."/>
            <person name="Tanikawa M."/>
            <person name="Yamazaki M."/>
            <person name="Ninomiya K."/>
            <person name="Ishibashi T."/>
            <person name="Yamashita H."/>
            <person name="Murakawa K."/>
            <person name="Fujimori K."/>
            <person name="Tanai H."/>
            <person name="Kimata M."/>
            <person name="Watanabe M."/>
            <person name="Hiraoka S."/>
            <person name="Chiba Y."/>
            <person name="Ishida S."/>
            <person name="Ono Y."/>
            <person name="Takiguchi S."/>
            <person name="Watanabe S."/>
            <person name="Yosida M."/>
            <person name="Hotuta T."/>
            <person name="Kusano J."/>
            <person name="Kanehori K."/>
            <person name="Takahashi-Fujii A."/>
            <person name="Hara H."/>
            <person name="Tanase T.-O."/>
            <person name="Nomura Y."/>
            <person name="Togiya S."/>
            <person name="Komai F."/>
            <person name="Hara R."/>
            <person name="Takeuchi K."/>
            <person name="Arita M."/>
            <person name="Imose N."/>
            <person name="Musashino K."/>
            <person name="Yuuki H."/>
            <person name="Oshima A."/>
            <person name="Sasaki N."/>
            <person name="Aotsuka S."/>
            <person name="Yoshikawa Y."/>
            <person name="Matsunawa H."/>
            <person name="Ichihara T."/>
            <person name="Shiohata N."/>
            <person name="Sano S."/>
            <person name="Moriya S."/>
            <person name="Momiyama H."/>
            <person name="Satoh N."/>
            <person name="Takami S."/>
            <person name="Terashima Y."/>
            <person name="Suzuki O."/>
            <person name="Nakagawa S."/>
            <person name="Senoh A."/>
            <person name="Mizoguchi H."/>
            <person name="Goto Y."/>
            <person name="Shimizu F."/>
            <person name="Wakebe H."/>
            <person name="Hishigaki H."/>
            <person name="Watanabe T."/>
            <person name="Sugiyama A."/>
            <person name="Takemoto M."/>
            <person name="Kawakami B."/>
            <person name="Yamazaki M."/>
            <person name="Watanabe K."/>
            <person name="Kumagai A."/>
            <person name="Itakura S."/>
            <person name="Fukuzumi Y."/>
            <person name="Fujimori Y."/>
            <person name="Komiyama M."/>
            <person name="Tashiro H."/>
            <person name="Tanigami A."/>
            <person name="Fujiwara T."/>
            <person name="Ono T."/>
            <person name="Yamada K."/>
            <person name="Fujii Y."/>
            <person name="Ozaki K."/>
            <person name="Hirao M."/>
            <person name="Ohmori Y."/>
            <person name="Kawabata A."/>
            <person name="Hikiji T."/>
            <person name="Kobatake N."/>
            <person name="Inagaki H."/>
            <person name="Ikema Y."/>
            <person name="Okamoto S."/>
            <person name="Okitani R."/>
            <person name="Kawakami T."/>
            <person name="Noguchi S."/>
            <person name="Itoh T."/>
            <person name="Shigeta K."/>
            <person name="Senba T."/>
            <person name="Matsumura K."/>
            <person name="Nakajima Y."/>
            <person name="Mizuno T."/>
            <person name="Morinaga M."/>
            <person name="Sasaki M."/>
            <person name="Togashi T."/>
            <person name="Oyama M."/>
            <person name="Hata H."/>
            <person name="Watanabe M."/>
            <person name="Komatsu T."/>
            <person name="Mizushima-Sugano J."/>
            <person name="Satoh T."/>
            <person name="Shirai Y."/>
            <person name="Takahashi Y."/>
            <person name="Nakagawa K."/>
            <person name="Okumura K."/>
            <person name="Nagase T."/>
            <person name="Nomura N."/>
            <person name="Kikuchi H."/>
            <person name="Masuho Y."/>
            <person name="Yamashita R."/>
            <person name="Nakai K."/>
            <person name="Yada T."/>
            <person name="Nakamura Y."/>
            <person name="Ohara O."/>
            <person name="Isogai T."/>
            <person name="Sugano S."/>
        </authorList>
    </citation>
    <scope>NUCLEOTIDE SEQUENCE [LARGE SCALE MRNA] (ISOFORMS MOCS1A AND 7)</scope>
    <source>
        <tissue>Placenta</tissue>
    </source>
</reference>
<reference key="4">
    <citation type="journal article" date="2003" name="Nature">
        <title>The DNA sequence and analysis of human chromosome 6.</title>
        <authorList>
            <person name="Mungall A.J."/>
            <person name="Palmer S.A."/>
            <person name="Sims S.K."/>
            <person name="Edwards C.A."/>
            <person name="Ashurst J.L."/>
            <person name="Wilming L."/>
            <person name="Jones M.C."/>
            <person name="Horton R."/>
            <person name="Hunt S.E."/>
            <person name="Scott C.E."/>
            <person name="Gilbert J.G.R."/>
            <person name="Clamp M.E."/>
            <person name="Bethel G."/>
            <person name="Milne S."/>
            <person name="Ainscough R."/>
            <person name="Almeida J.P."/>
            <person name="Ambrose K.D."/>
            <person name="Andrews T.D."/>
            <person name="Ashwell R.I.S."/>
            <person name="Babbage A.K."/>
            <person name="Bagguley C.L."/>
            <person name="Bailey J."/>
            <person name="Banerjee R."/>
            <person name="Barker D.J."/>
            <person name="Barlow K.F."/>
            <person name="Bates K."/>
            <person name="Beare D.M."/>
            <person name="Beasley H."/>
            <person name="Beasley O."/>
            <person name="Bird C.P."/>
            <person name="Blakey S.E."/>
            <person name="Bray-Allen S."/>
            <person name="Brook J."/>
            <person name="Brown A.J."/>
            <person name="Brown J.Y."/>
            <person name="Burford D.C."/>
            <person name="Burrill W."/>
            <person name="Burton J."/>
            <person name="Carder C."/>
            <person name="Carter N.P."/>
            <person name="Chapman J.C."/>
            <person name="Clark S.Y."/>
            <person name="Clark G."/>
            <person name="Clee C.M."/>
            <person name="Clegg S."/>
            <person name="Cobley V."/>
            <person name="Collier R.E."/>
            <person name="Collins J.E."/>
            <person name="Colman L.K."/>
            <person name="Corby N.R."/>
            <person name="Coville G.J."/>
            <person name="Culley K.M."/>
            <person name="Dhami P."/>
            <person name="Davies J."/>
            <person name="Dunn M."/>
            <person name="Earthrowl M.E."/>
            <person name="Ellington A.E."/>
            <person name="Evans K.A."/>
            <person name="Faulkner L."/>
            <person name="Francis M.D."/>
            <person name="Frankish A."/>
            <person name="Frankland J."/>
            <person name="French L."/>
            <person name="Garner P."/>
            <person name="Garnett J."/>
            <person name="Ghori M.J."/>
            <person name="Gilby L.M."/>
            <person name="Gillson C.J."/>
            <person name="Glithero R.J."/>
            <person name="Grafham D.V."/>
            <person name="Grant M."/>
            <person name="Gribble S."/>
            <person name="Griffiths C."/>
            <person name="Griffiths M.N.D."/>
            <person name="Hall R."/>
            <person name="Halls K.S."/>
            <person name="Hammond S."/>
            <person name="Harley J.L."/>
            <person name="Hart E.A."/>
            <person name="Heath P.D."/>
            <person name="Heathcott R."/>
            <person name="Holmes S.J."/>
            <person name="Howden P.J."/>
            <person name="Howe K.L."/>
            <person name="Howell G.R."/>
            <person name="Huckle E."/>
            <person name="Humphray S.J."/>
            <person name="Humphries M.D."/>
            <person name="Hunt A.R."/>
            <person name="Johnson C.M."/>
            <person name="Joy A.A."/>
            <person name="Kay M."/>
            <person name="Keenan S.J."/>
            <person name="Kimberley A.M."/>
            <person name="King A."/>
            <person name="Laird G.K."/>
            <person name="Langford C."/>
            <person name="Lawlor S."/>
            <person name="Leongamornlert D.A."/>
            <person name="Leversha M."/>
            <person name="Lloyd C.R."/>
            <person name="Lloyd D.M."/>
            <person name="Loveland J.E."/>
            <person name="Lovell J."/>
            <person name="Martin S."/>
            <person name="Mashreghi-Mohammadi M."/>
            <person name="Maslen G.L."/>
            <person name="Matthews L."/>
            <person name="McCann O.T."/>
            <person name="McLaren S.J."/>
            <person name="McLay K."/>
            <person name="McMurray A."/>
            <person name="Moore M.J.F."/>
            <person name="Mullikin J.C."/>
            <person name="Niblett D."/>
            <person name="Nickerson T."/>
            <person name="Novik K.L."/>
            <person name="Oliver K."/>
            <person name="Overton-Larty E.K."/>
            <person name="Parker A."/>
            <person name="Patel R."/>
            <person name="Pearce A.V."/>
            <person name="Peck A.I."/>
            <person name="Phillimore B.J.C.T."/>
            <person name="Phillips S."/>
            <person name="Plumb R.W."/>
            <person name="Porter K.M."/>
            <person name="Ramsey Y."/>
            <person name="Ranby S.A."/>
            <person name="Rice C.M."/>
            <person name="Ross M.T."/>
            <person name="Searle S.M."/>
            <person name="Sehra H.K."/>
            <person name="Sheridan E."/>
            <person name="Skuce C.D."/>
            <person name="Smith S."/>
            <person name="Smith M."/>
            <person name="Spraggon L."/>
            <person name="Squares S.L."/>
            <person name="Steward C.A."/>
            <person name="Sycamore N."/>
            <person name="Tamlyn-Hall G."/>
            <person name="Tester J."/>
            <person name="Theaker A.J."/>
            <person name="Thomas D.W."/>
            <person name="Thorpe A."/>
            <person name="Tracey A."/>
            <person name="Tromans A."/>
            <person name="Tubby B."/>
            <person name="Wall M."/>
            <person name="Wallis J.M."/>
            <person name="West A.P."/>
            <person name="White S.S."/>
            <person name="Whitehead S.L."/>
            <person name="Whittaker H."/>
            <person name="Wild A."/>
            <person name="Willey D.J."/>
            <person name="Wilmer T.E."/>
            <person name="Wood J.M."/>
            <person name="Wray P.W."/>
            <person name="Wyatt J.C."/>
            <person name="Young L."/>
            <person name="Younger R.M."/>
            <person name="Bentley D.R."/>
            <person name="Coulson A."/>
            <person name="Durbin R.M."/>
            <person name="Hubbard T."/>
            <person name="Sulston J.E."/>
            <person name="Dunham I."/>
            <person name="Rogers J."/>
            <person name="Beck S."/>
        </authorList>
    </citation>
    <scope>NUCLEOTIDE SEQUENCE [LARGE SCALE GENOMIC DNA]</scope>
</reference>
<reference key="5">
    <citation type="journal article" date="2004" name="Genome Res.">
        <title>The status, quality, and expansion of the NIH full-length cDNA project: the Mammalian Gene Collection (MGC).</title>
        <authorList>
            <consortium name="The MGC Project Team"/>
        </authorList>
    </citation>
    <scope>NUCLEOTIDE SEQUENCE [LARGE SCALE MRNA] (ISOFORM 4)</scope>
    <source>
        <tissue>Colon</tissue>
        <tissue>Kidney</tissue>
    </source>
</reference>
<reference key="6">
    <citation type="journal article" date="2000" name="RNA">
        <title>Diverse splicing mechanisms fuse the evolutionarily conserved bicistronic MOCS1A and MOCS1B open reading frames.</title>
        <authorList>
            <person name="Gray T.A."/>
            <person name="Nicholls R.D."/>
        </authorList>
    </citation>
    <scope>NUCLEOTIDE SEQUENCE [MRNA] OF 283-636 (ISOFORM 6)</scope>
    <scope>NUCLEOTIDE SEQUENCE [MRNA] OF 377-636 (ISOFORM MOCS1B)</scope>
</reference>
<reference key="7">
    <citation type="submission" date="2003-09" db="EMBL/GenBank/DDBJ databases">
        <title>Identification of a human migration-inducing gene.</title>
        <authorList>
            <person name="Kim J.W."/>
        </authorList>
    </citation>
    <scope>NUCLEOTIDE SEQUENCE [MRNA] OF 386-636</scope>
</reference>
<reference key="8">
    <citation type="journal article" date="2002" name="J. Biol. Chem.">
        <title>Functionality of alternative splice forms of the first enzymes involved in human molybdenum cofactor biosynthesis.</title>
        <authorList>
            <person name="Haenzelmann P."/>
            <person name="Schwarz G."/>
            <person name="Mendel R.R."/>
        </authorList>
    </citation>
    <scope>FUNCTION</scope>
    <scope>ALTERNATIVE SPLICING (ISOFORMS MOCS1A AND MOCS1B)</scope>
</reference>
<reference key="9">
    <citation type="journal article" date="2002" name="Mol. Genet. Metab.">
        <title>The bicistronic MOCS1 gene has alternative start codons on two mutually exclusive exons.</title>
        <authorList>
            <person name="Gross-Hardt S."/>
            <person name="Reiss J."/>
        </authorList>
    </citation>
    <scope>ALTERNATIVE SPLICING (ISOFORMS MOCS1A; 2 AND 3)</scope>
    <scope>TISSUE SPECIFICITY</scope>
</reference>
<reference key="10">
    <citation type="journal article" date="2004" name="J. Biol. Chem.">
        <title>Characterization of MOCS1A, an oxygen-sensitive iron-sulfur protein involved in human molybdenum cofactor biosynthesis.</title>
        <authorList>
            <person name="Haenzelmann P."/>
            <person name="Hernandez H.L."/>
            <person name="Menzel C."/>
            <person name="Garcia-Serres R."/>
            <person name="Huynh B.H."/>
            <person name="Johnson M.K."/>
            <person name="Mendel R.R."/>
            <person name="Schindelin H."/>
        </authorList>
    </citation>
    <scope>COFACTOR</scope>
    <scope>CHARACTERIZATION OF IRON-SULFUR CLUSTER-BINDING</scope>
    <scope>MUTAGENESIS OF CYS-80; CYS-84; CYS-87; CYS-312; CYS-315 AND CYS-329</scope>
</reference>
<reference key="11">
    <citation type="journal article" date="2009" name="Science">
        <title>Lysine acetylation targets protein complexes and co-regulates major cellular functions.</title>
        <authorList>
            <person name="Choudhary C."/>
            <person name="Kumar C."/>
            <person name="Gnad F."/>
            <person name="Nielsen M.L."/>
            <person name="Rehman M."/>
            <person name="Walther T.C."/>
            <person name="Olsen J.V."/>
            <person name="Mann M."/>
        </authorList>
    </citation>
    <scope>ACETYLATION [LARGE SCALE ANALYSIS] AT LYS-198</scope>
    <scope>IDENTIFICATION BY MASS SPECTROMETRY [LARGE SCALE ANALYSIS]</scope>
</reference>
<reference key="12">
    <citation type="journal article" date="2013" name="J. Am. Chem. Soc.">
        <title>Identification of a cyclic nucleotide as a cryptic intermediate in molybdenum cofactor biosynthesis.</title>
        <authorList>
            <person name="Hover B.M."/>
            <person name="Loksztejn A."/>
            <person name="Ribeiro A.A."/>
            <person name="Yokoyama K."/>
        </authorList>
    </citation>
    <scope>FUNCTION</scope>
    <scope>CATALYTIC ACTIVITY OF MOCS1B</scope>
    <scope>BIOPHYSICOCHEMICAL PROPERTIES</scope>
</reference>
<reference key="13">
    <citation type="journal article" date="2013" name="J. Proteome Res.">
        <title>Toward a comprehensive characterization of a human cancer cell phosphoproteome.</title>
        <authorList>
            <person name="Zhou H."/>
            <person name="Di Palma S."/>
            <person name="Preisinger C."/>
            <person name="Peng M."/>
            <person name="Polat A.N."/>
            <person name="Heck A.J."/>
            <person name="Mohammed S."/>
        </authorList>
    </citation>
    <scope>PHOSPHORYLATION [LARGE SCALE ANALYSIS] AT SER-64</scope>
    <scope>IDENTIFICATION BY MASS SPECTROMETRY [LARGE SCALE ANALYSIS]</scope>
    <source>
        <tissue>Erythroleukemia</tissue>
    </source>
</reference>
<reference key="14">
    <citation type="journal article" date="2015" name="J. Am. Chem. Soc.">
        <title>C-Terminal glycine-gated radical initiation by GTP 3',8-cyclase in the molybdenum cofactor biosynthesis.</title>
        <authorList>
            <person name="Hover B.M."/>
            <person name="Yokoyama K."/>
        </authorList>
    </citation>
    <scope>REVISION OF PTM</scope>
</reference>
<reference key="15">
    <citation type="journal article" date="1998" name="Hum. Genet.">
        <title>Genomic structure and mutational spectrum of the bicistronic MOCS1 gene defective in molybdenum cofactor deficiency type A.</title>
        <authorList>
            <person name="Reiss J.P."/>
            <person name="Christensen E."/>
            <person name="Kurlemann G."/>
            <person name="Zabot M.-T."/>
            <person name="Dorche C."/>
        </authorList>
    </citation>
    <scope>VARIANTS MOCODA TRP-73; ASP-126; ASP-127; GLN-319 AND GLU-324</scope>
</reference>
<reference key="16">
    <citation type="journal article" date="2003" name="Hum. Mutat.">
        <title>Mutations in the molybdenum cofactor biosynthetic genes MOCS1, MOCS2, and GEPH.</title>
        <authorList>
            <person name="Reiss J."/>
            <person name="Johnson J.L."/>
        </authorList>
    </citation>
    <scope>VARIANTS MOCODA TRP-123 AND ARG-324</scope>
</reference>
<reference key="17">
    <citation type="journal article" date="2005" name="Hum. Genet.">
        <title>Ten novel mutations in the molybdenum cofactor genes MOCS1 and MOCS2 and in vitro characterization of a MOCS2 mutation that abolishes the binding ability of molybdopterin synthase.</title>
        <authorList>
            <person name="Leimkuehler S."/>
            <person name="Charcosset M."/>
            <person name="Latour P."/>
            <person name="Dorche C."/>
            <person name="Kleppe S."/>
            <person name="Scaglia F."/>
            <person name="Szymczak I."/>
            <person name="Schupp P."/>
            <person name="Hahnewald R."/>
            <person name="Reiss J."/>
        </authorList>
    </citation>
    <scope>VARIANTS MOCODA TRP-67; GLY-80 AND PHE-84</scope>
</reference>
<accession>Q9NZB8</accession>
<accession>B3KPT7</accession>
<accession>B4DTP1</accession>
<accession>O14940</accession>
<accession>O14941</accession>
<accession>O75710</accession>
<accession>Q5J7W0</accession>
<accession>Q5TCE1</accession>
<accession>Q5TCE2</accession>
<accession>Q5TCE6</accession>
<accession>Q5TCE9</accession>
<accession>Q5TCF0</accession>
<accession>Q5TCF1</accession>
<accession>Q8N418</accession>
<accession>Q9NZB7</accession>
<accession>Q9UEM1</accession>
<evidence type="ECO:0000250" key="1"/>
<evidence type="ECO:0000250" key="2">
    <source>
        <dbReference type="UniProtKB" id="P69848"/>
    </source>
</evidence>
<evidence type="ECO:0000250" key="3">
    <source>
        <dbReference type="UniProtKB" id="Q5RKZ7"/>
    </source>
</evidence>
<evidence type="ECO:0000255" key="4"/>
<evidence type="ECO:0000255" key="5">
    <source>
        <dbReference type="PROSITE-ProRule" id="PRU01266"/>
    </source>
</evidence>
<evidence type="ECO:0000256" key="6">
    <source>
        <dbReference type="SAM" id="MobiDB-lite"/>
    </source>
</evidence>
<evidence type="ECO:0000269" key="7">
    <source>
    </source>
</evidence>
<evidence type="ECO:0000269" key="8">
    <source>
    </source>
</evidence>
<evidence type="ECO:0000269" key="9">
    <source>
    </source>
</evidence>
<evidence type="ECO:0000269" key="10">
    <source>
    </source>
</evidence>
<evidence type="ECO:0000269" key="11">
    <source>
    </source>
</evidence>
<evidence type="ECO:0000269" key="12">
    <source>
    </source>
</evidence>
<evidence type="ECO:0000269" key="13">
    <source>
    </source>
</evidence>
<evidence type="ECO:0000269" key="14">
    <source>
    </source>
</evidence>
<evidence type="ECO:0000303" key="15">
    <source>
    </source>
</evidence>
<evidence type="ECO:0000303" key="16">
    <source>
    </source>
</evidence>
<evidence type="ECO:0000303" key="17">
    <source>
    </source>
</evidence>
<evidence type="ECO:0000303" key="18">
    <source>
    </source>
</evidence>
<evidence type="ECO:0000303" key="19">
    <source ref="2"/>
</evidence>
<evidence type="ECO:0000305" key="20"/>
<evidence type="ECO:0000305" key="21">
    <source>
    </source>
</evidence>
<evidence type="ECO:0007744" key="22">
    <source>
    </source>
</evidence>
<evidence type="ECO:0007744" key="23">
    <source>
    </source>
</evidence>